<proteinExistence type="inferred from homology"/>
<gene>
    <name evidence="1" type="primary">iscA</name>
    <name type="ordered locus">YpsIP31758_1170</name>
</gene>
<name>ISCA_YERP3</name>
<organism>
    <name type="scientific">Yersinia pseudotuberculosis serotype O:1b (strain IP 31758)</name>
    <dbReference type="NCBI Taxonomy" id="349747"/>
    <lineage>
        <taxon>Bacteria</taxon>
        <taxon>Pseudomonadati</taxon>
        <taxon>Pseudomonadota</taxon>
        <taxon>Gammaproteobacteria</taxon>
        <taxon>Enterobacterales</taxon>
        <taxon>Yersiniaceae</taxon>
        <taxon>Yersinia</taxon>
    </lineage>
</organism>
<protein>
    <recommendedName>
        <fullName evidence="1">Iron-binding protein IscA</fullName>
    </recommendedName>
    <alternativeName>
        <fullName evidence="1">Iron-sulfur cluster assembly protein</fullName>
    </alternativeName>
</protein>
<evidence type="ECO:0000255" key="1">
    <source>
        <dbReference type="HAMAP-Rule" id="MF_01429"/>
    </source>
</evidence>
<sequence length="107" mass="11589">MSISISDSAAQRVSAFLNHRGKGLGLRLGVRTSGCSGMAYVLEFVDEINDDDIVFEDKGVKVIIDGKSMVYLDGTELDFVKEGLNEGFKFNNPNVSNECGCGESFNV</sequence>
<reference key="1">
    <citation type="journal article" date="2007" name="PLoS Genet.">
        <title>The complete genome sequence of Yersinia pseudotuberculosis IP31758, the causative agent of Far East scarlet-like fever.</title>
        <authorList>
            <person name="Eppinger M."/>
            <person name="Rosovitz M.J."/>
            <person name="Fricke W.F."/>
            <person name="Rasko D.A."/>
            <person name="Kokorina G."/>
            <person name="Fayolle C."/>
            <person name="Lindler L.E."/>
            <person name="Carniel E."/>
            <person name="Ravel J."/>
        </authorList>
    </citation>
    <scope>NUCLEOTIDE SEQUENCE [LARGE SCALE GENOMIC DNA]</scope>
    <source>
        <strain>IP 31758</strain>
    </source>
</reference>
<comment type="function">
    <text evidence="1">Is able to transfer iron-sulfur clusters to apo-ferredoxin. Multiple cycles of [2Fe2S] cluster formation and transfer are observed, suggesting that IscA acts catalytically. Recruits intracellular free iron so as to provide iron for the assembly of transient iron-sulfur cluster in IscU in the presence of IscS, L-cysteine and the thioredoxin reductase system TrxA/TrxB.</text>
</comment>
<comment type="cofactor">
    <cofactor evidence="1">
        <name>Fe cation</name>
        <dbReference type="ChEBI" id="CHEBI:24875"/>
    </cofactor>
    <text evidence="1">Binds 2 iron ions per dimer. The dimer may bind additional iron ions.</text>
</comment>
<comment type="subunit">
    <text evidence="1">Homodimer; may form tetramers and higher multimers.</text>
</comment>
<comment type="similarity">
    <text evidence="1">Belongs to the HesB/IscA family.</text>
</comment>
<accession>A7FFX3</accession>
<keyword id="KW-0408">Iron</keyword>
<keyword id="KW-0479">Metal-binding</keyword>
<dbReference type="EMBL" id="CP000720">
    <property type="protein sequence ID" value="ABS47991.1"/>
    <property type="molecule type" value="Genomic_DNA"/>
</dbReference>
<dbReference type="RefSeq" id="WP_002209834.1">
    <property type="nucleotide sequence ID" value="NC_009708.1"/>
</dbReference>
<dbReference type="SMR" id="A7FFX3"/>
<dbReference type="GeneID" id="96662216"/>
<dbReference type="KEGG" id="ypi:YpsIP31758_1170"/>
<dbReference type="HOGENOM" id="CLU_069054_5_1_6"/>
<dbReference type="Proteomes" id="UP000002412">
    <property type="component" value="Chromosome"/>
</dbReference>
<dbReference type="GO" id="GO:0005829">
    <property type="term" value="C:cytosol"/>
    <property type="evidence" value="ECO:0007669"/>
    <property type="project" value="TreeGrafter"/>
</dbReference>
<dbReference type="GO" id="GO:0051537">
    <property type="term" value="F:2 iron, 2 sulfur cluster binding"/>
    <property type="evidence" value="ECO:0007669"/>
    <property type="project" value="TreeGrafter"/>
</dbReference>
<dbReference type="GO" id="GO:0005506">
    <property type="term" value="F:iron ion binding"/>
    <property type="evidence" value="ECO:0007669"/>
    <property type="project" value="UniProtKB-UniRule"/>
</dbReference>
<dbReference type="GO" id="GO:0016226">
    <property type="term" value="P:iron-sulfur cluster assembly"/>
    <property type="evidence" value="ECO:0007669"/>
    <property type="project" value="UniProtKB-UniRule"/>
</dbReference>
<dbReference type="FunFam" id="2.60.300.12:FF:000001">
    <property type="entry name" value="Iron-binding protein IscA"/>
    <property type="match status" value="1"/>
</dbReference>
<dbReference type="Gene3D" id="2.60.300.12">
    <property type="entry name" value="HesB-like domain"/>
    <property type="match status" value="1"/>
</dbReference>
<dbReference type="HAMAP" id="MF_01429">
    <property type="entry name" value="Fe_S_insert_IscA"/>
    <property type="match status" value="1"/>
</dbReference>
<dbReference type="InterPro" id="IPR050322">
    <property type="entry name" value="Fe-S_cluster_asmbl/transfer"/>
</dbReference>
<dbReference type="InterPro" id="IPR000361">
    <property type="entry name" value="FeS_biogenesis"/>
</dbReference>
<dbReference type="InterPro" id="IPR016092">
    <property type="entry name" value="FeS_cluster_insertion"/>
</dbReference>
<dbReference type="InterPro" id="IPR017870">
    <property type="entry name" value="FeS_cluster_insertion_CS"/>
</dbReference>
<dbReference type="InterPro" id="IPR035903">
    <property type="entry name" value="HesB-like_dom_sf"/>
</dbReference>
<dbReference type="InterPro" id="IPR011302">
    <property type="entry name" value="IscA_proteobacteria"/>
</dbReference>
<dbReference type="NCBIfam" id="TIGR00049">
    <property type="entry name" value="iron-sulfur cluster assembly accessory protein"/>
    <property type="match status" value="1"/>
</dbReference>
<dbReference type="NCBIfam" id="TIGR02011">
    <property type="entry name" value="IscA"/>
    <property type="match status" value="1"/>
</dbReference>
<dbReference type="NCBIfam" id="NF007049">
    <property type="entry name" value="PRK09502.1"/>
    <property type="match status" value="1"/>
</dbReference>
<dbReference type="PANTHER" id="PTHR10072:SF41">
    <property type="entry name" value="IRON-SULFUR CLUSTER ASSEMBLY 1 HOMOLOG, MITOCHONDRIAL"/>
    <property type="match status" value="1"/>
</dbReference>
<dbReference type="PANTHER" id="PTHR10072">
    <property type="entry name" value="IRON-SULFUR CLUSTER ASSEMBLY PROTEIN"/>
    <property type="match status" value="1"/>
</dbReference>
<dbReference type="Pfam" id="PF01521">
    <property type="entry name" value="Fe-S_biosyn"/>
    <property type="match status" value="1"/>
</dbReference>
<dbReference type="SUPFAM" id="SSF89360">
    <property type="entry name" value="HesB-like domain"/>
    <property type="match status" value="1"/>
</dbReference>
<dbReference type="PROSITE" id="PS01152">
    <property type="entry name" value="HESB"/>
    <property type="match status" value="1"/>
</dbReference>
<feature type="chain" id="PRO_1000068522" description="Iron-binding protein IscA">
    <location>
        <begin position="1"/>
        <end position="107"/>
    </location>
</feature>
<feature type="binding site" evidence="1">
    <location>
        <position position="35"/>
    </location>
    <ligand>
        <name>Fe cation</name>
        <dbReference type="ChEBI" id="CHEBI:24875"/>
    </ligand>
</feature>
<feature type="binding site" evidence="1">
    <location>
        <position position="99"/>
    </location>
    <ligand>
        <name>Fe cation</name>
        <dbReference type="ChEBI" id="CHEBI:24875"/>
    </ligand>
</feature>
<feature type="binding site" evidence="1">
    <location>
        <position position="101"/>
    </location>
    <ligand>
        <name>Fe cation</name>
        <dbReference type="ChEBI" id="CHEBI:24875"/>
    </ligand>
</feature>